<keyword id="KW-0143">Chaperone</keyword>
<keyword id="KW-0963">Cytoplasm</keyword>
<keyword id="KW-0996">Nickel insertion</keyword>
<keyword id="KW-1185">Reference proteome</keyword>
<sequence>MVKDTTHSILEISTIHGKSSVTGSKIFRPLKIFALEKNKACHLVFSNYGGGFVEGDSIDLTIDCKADTVSAFSSQANTRIYRSEHGKTCKQTITGTVGENALVVFMGDPVVPHQKSIFEQHLFWKLEKNAVLLVIDWFEAGRILNGERFAFDSFFTELKIESNGVPIVWDRFKMDPSQNNMNSPGAFLDHSSYINIFLAGDENLTRVKSIETQLRFLAAQYFHEHIENKSESLIRIGSAVKVNEQVFMIRCSAKNNDLLQPFVKALAEHMSDKELLGFNPFEGRN</sequence>
<comment type="function">
    <text evidence="1">Required for maturation of urease via the functional incorporation of the urease nickel metallocenter.</text>
</comment>
<comment type="subunit">
    <text evidence="1">UreD, UreF and UreG form a complex that acts as a GTP-hydrolysis-dependent molecular chaperone, activating the urease apoprotein by helping to assemble the nickel containing metallocenter of UreC. The UreE protein probably delivers the nickel.</text>
</comment>
<comment type="subcellular location">
    <subcellularLocation>
        <location evidence="1">Cytoplasm</location>
    </subcellularLocation>
</comment>
<comment type="similarity">
    <text evidence="1">Belongs to the UreD family.</text>
</comment>
<proteinExistence type="inferred from homology"/>
<evidence type="ECO:0000255" key="1">
    <source>
        <dbReference type="HAMAP-Rule" id="MF_01384"/>
    </source>
</evidence>
<protein>
    <recommendedName>
        <fullName evidence="1">Urease accessory protein UreD</fullName>
    </recommendedName>
</protein>
<gene>
    <name evidence="1" type="primary">ureD</name>
    <name type="ordered locus">CHU_1264</name>
</gene>
<name>URED_CYTH3</name>
<organism>
    <name type="scientific">Cytophaga hutchinsonii (strain ATCC 33406 / DSM 1761 / CIP 103989 / NBRC 15051 / NCIMB 9469 / D465)</name>
    <dbReference type="NCBI Taxonomy" id="269798"/>
    <lineage>
        <taxon>Bacteria</taxon>
        <taxon>Pseudomonadati</taxon>
        <taxon>Bacteroidota</taxon>
        <taxon>Cytophagia</taxon>
        <taxon>Cytophagales</taxon>
        <taxon>Cytophagaceae</taxon>
        <taxon>Cytophaga</taxon>
    </lineage>
</organism>
<reference key="1">
    <citation type="journal article" date="2007" name="Appl. Environ. Microbiol.">
        <title>Genome sequence of the cellulolytic gliding bacterium Cytophaga hutchinsonii.</title>
        <authorList>
            <person name="Xie G."/>
            <person name="Bruce D.C."/>
            <person name="Challacombe J.F."/>
            <person name="Chertkov O."/>
            <person name="Detter J.C."/>
            <person name="Gilna P."/>
            <person name="Han C.S."/>
            <person name="Lucas S."/>
            <person name="Misra M."/>
            <person name="Myers G.L."/>
            <person name="Richardson P."/>
            <person name="Tapia R."/>
            <person name="Thayer N."/>
            <person name="Thompson L.S."/>
            <person name="Brettin T.S."/>
            <person name="Henrissat B."/>
            <person name="Wilson D.B."/>
            <person name="McBride M.J."/>
        </authorList>
    </citation>
    <scope>NUCLEOTIDE SEQUENCE [LARGE SCALE GENOMIC DNA]</scope>
    <source>
        <strain>ATCC 33406 / DSM 1761 / JCM 20678 / CIP 103989 / IAM 12607 / NBRC 15051 / NCIMB 9469 / D465</strain>
    </source>
</reference>
<feature type="chain" id="PRO_0000346560" description="Urease accessory protein UreD">
    <location>
        <begin position="1"/>
        <end position="285"/>
    </location>
</feature>
<dbReference type="EMBL" id="CP000383">
    <property type="protein sequence ID" value="ABG58536.1"/>
    <property type="molecule type" value="Genomic_DNA"/>
</dbReference>
<dbReference type="RefSeq" id="WP_011584651.1">
    <property type="nucleotide sequence ID" value="NC_008255.1"/>
</dbReference>
<dbReference type="SMR" id="Q11VN0"/>
<dbReference type="STRING" id="269798.CHU_1264"/>
<dbReference type="KEGG" id="chu:CHU_1264"/>
<dbReference type="eggNOG" id="COG0829">
    <property type="taxonomic scope" value="Bacteria"/>
</dbReference>
<dbReference type="HOGENOM" id="CLU_021703_1_0_10"/>
<dbReference type="OrthoDB" id="870989at2"/>
<dbReference type="Proteomes" id="UP000001822">
    <property type="component" value="Chromosome"/>
</dbReference>
<dbReference type="GO" id="GO:0005737">
    <property type="term" value="C:cytoplasm"/>
    <property type="evidence" value="ECO:0007669"/>
    <property type="project" value="UniProtKB-SubCell"/>
</dbReference>
<dbReference type="GO" id="GO:0016151">
    <property type="term" value="F:nickel cation binding"/>
    <property type="evidence" value="ECO:0007669"/>
    <property type="project" value="UniProtKB-UniRule"/>
</dbReference>
<dbReference type="HAMAP" id="MF_01384">
    <property type="entry name" value="UreD"/>
    <property type="match status" value="1"/>
</dbReference>
<dbReference type="InterPro" id="IPR002669">
    <property type="entry name" value="UreD"/>
</dbReference>
<dbReference type="PANTHER" id="PTHR33643">
    <property type="entry name" value="UREASE ACCESSORY PROTEIN D"/>
    <property type="match status" value="1"/>
</dbReference>
<dbReference type="PANTHER" id="PTHR33643:SF1">
    <property type="entry name" value="UREASE ACCESSORY PROTEIN D"/>
    <property type="match status" value="1"/>
</dbReference>
<dbReference type="Pfam" id="PF01774">
    <property type="entry name" value="UreD"/>
    <property type="match status" value="1"/>
</dbReference>
<accession>Q11VN0</accession>